<organism>
    <name type="scientific">Staphylococcus carnosus (strain TM300)</name>
    <dbReference type="NCBI Taxonomy" id="396513"/>
    <lineage>
        <taxon>Bacteria</taxon>
        <taxon>Bacillati</taxon>
        <taxon>Bacillota</taxon>
        <taxon>Bacilli</taxon>
        <taxon>Bacillales</taxon>
        <taxon>Staphylococcaceae</taxon>
        <taxon>Staphylococcus</taxon>
    </lineage>
</organism>
<reference key="1">
    <citation type="journal article" date="2009" name="Appl. Environ. Microbiol.">
        <title>Genome analysis of the meat starter culture bacterium Staphylococcus carnosus TM300.</title>
        <authorList>
            <person name="Rosenstein R."/>
            <person name="Nerz C."/>
            <person name="Biswas L."/>
            <person name="Resch A."/>
            <person name="Raddatz G."/>
            <person name="Schuster S.C."/>
            <person name="Goetz F."/>
        </authorList>
    </citation>
    <scope>NUCLEOTIDE SEQUENCE [LARGE SCALE GENOMIC DNA]</scope>
    <source>
        <strain>TM300</strain>
    </source>
</reference>
<gene>
    <name evidence="1" type="primary">lipA</name>
    <name type="ordered locus">Sca_0528</name>
</gene>
<evidence type="ECO:0000255" key="1">
    <source>
        <dbReference type="HAMAP-Rule" id="MF_00206"/>
    </source>
</evidence>
<evidence type="ECO:0000255" key="2">
    <source>
        <dbReference type="PROSITE-ProRule" id="PRU01266"/>
    </source>
</evidence>
<evidence type="ECO:0000256" key="3">
    <source>
        <dbReference type="SAM" id="MobiDB-lite"/>
    </source>
</evidence>
<keyword id="KW-0004">4Fe-4S</keyword>
<keyword id="KW-0963">Cytoplasm</keyword>
<keyword id="KW-0408">Iron</keyword>
<keyword id="KW-0411">Iron-sulfur</keyword>
<keyword id="KW-0479">Metal-binding</keyword>
<keyword id="KW-1185">Reference proteome</keyword>
<keyword id="KW-0949">S-adenosyl-L-methionine</keyword>
<keyword id="KW-0808">Transferase</keyword>
<comment type="function">
    <text evidence="1">Catalyzes the radical-mediated insertion of two sulfur atoms into the C-6 and C-8 positions of the octanoyl moiety bound to the lipoyl domains of lipoate-dependent enzymes, thereby converting the octanoylated domains into lipoylated derivatives.</text>
</comment>
<comment type="catalytic activity">
    <reaction evidence="1">
        <text>[[Fe-S] cluster scaffold protein carrying a second [4Fe-4S](2+) cluster] + N(6)-octanoyl-L-lysyl-[protein] + 2 oxidized [2Fe-2S]-[ferredoxin] + 2 S-adenosyl-L-methionine + 4 H(+) = [[Fe-S] cluster scaffold protein] + N(6)-[(R)-dihydrolipoyl]-L-lysyl-[protein] + 4 Fe(3+) + 2 hydrogen sulfide + 2 5'-deoxyadenosine + 2 L-methionine + 2 reduced [2Fe-2S]-[ferredoxin]</text>
        <dbReference type="Rhea" id="RHEA:16585"/>
        <dbReference type="Rhea" id="RHEA-COMP:9928"/>
        <dbReference type="Rhea" id="RHEA-COMP:10000"/>
        <dbReference type="Rhea" id="RHEA-COMP:10001"/>
        <dbReference type="Rhea" id="RHEA-COMP:10475"/>
        <dbReference type="Rhea" id="RHEA-COMP:14568"/>
        <dbReference type="Rhea" id="RHEA-COMP:14569"/>
        <dbReference type="ChEBI" id="CHEBI:15378"/>
        <dbReference type="ChEBI" id="CHEBI:17319"/>
        <dbReference type="ChEBI" id="CHEBI:29034"/>
        <dbReference type="ChEBI" id="CHEBI:29919"/>
        <dbReference type="ChEBI" id="CHEBI:33722"/>
        <dbReference type="ChEBI" id="CHEBI:33737"/>
        <dbReference type="ChEBI" id="CHEBI:33738"/>
        <dbReference type="ChEBI" id="CHEBI:57844"/>
        <dbReference type="ChEBI" id="CHEBI:59789"/>
        <dbReference type="ChEBI" id="CHEBI:78809"/>
        <dbReference type="ChEBI" id="CHEBI:83100"/>
        <dbReference type="EC" id="2.8.1.8"/>
    </reaction>
</comment>
<comment type="cofactor">
    <cofactor evidence="1">
        <name>[4Fe-4S] cluster</name>
        <dbReference type="ChEBI" id="CHEBI:49883"/>
    </cofactor>
    <text evidence="1">Binds 2 [4Fe-4S] clusters per subunit. One cluster is coordinated with 3 cysteines and an exchangeable S-adenosyl-L-methionine.</text>
</comment>
<comment type="pathway">
    <text evidence="1">Protein modification; protein lipoylation via endogenous pathway; protein N(6)-(lipoyl)lysine from octanoyl-[acyl-carrier-protein].</text>
</comment>
<comment type="subcellular location">
    <subcellularLocation>
        <location evidence="1">Cytoplasm</location>
    </subcellularLocation>
</comment>
<comment type="similarity">
    <text evidence="1">Belongs to the radical SAM superfamily. Lipoyl synthase family.</text>
</comment>
<protein>
    <recommendedName>
        <fullName evidence="1">Lipoyl synthase</fullName>
        <ecNumber evidence="1">2.8.1.8</ecNumber>
    </recommendedName>
    <alternativeName>
        <fullName evidence="1">Lip-syn</fullName>
        <shortName evidence="1">LS</shortName>
    </alternativeName>
    <alternativeName>
        <fullName evidence="1">Lipoate synthase</fullName>
    </alternativeName>
    <alternativeName>
        <fullName evidence="1">Lipoic acid synthase</fullName>
    </alternativeName>
    <alternativeName>
        <fullName evidence="1">Sulfur insertion protein LipA</fullName>
    </alternativeName>
</protein>
<proteinExistence type="inferred from homology"/>
<sequence>MATKNEEILRKPDWLKIKLNTNENYTGLKKMMREKNLHTVCEEAKCPNIHECWGERRTATFMILGAVCTRACRFCAVKTGLPNELDLGEPERVAESVELMNLKHVVITAVARDDLRDAGSNVYAETVRKVRERNPYTTIEILPSDMGGDYDALETLMASKPDILNHNIETVRRLTPRVRARATYDRTLEFLRRSKELQPDIPTKSSIMVGLGETIEELHETMDDLRAADVDILTIGQYLQPSRKHLKVQKYYSPLEFGKLRKVAMEKGFKHCQAGPLVRSSYHADEQVNEAAKERQRIGDEKLEAAKNEA</sequence>
<feature type="chain" id="PRO_1000124646" description="Lipoyl synthase">
    <location>
        <begin position="1"/>
        <end position="310"/>
    </location>
</feature>
<feature type="domain" description="Radical SAM core" evidence="2">
    <location>
        <begin position="54"/>
        <end position="270"/>
    </location>
</feature>
<feature type="region of interest" description="Disordered" evidence="3">
    <location>
        <begin position="285"/>
        <end position="310"/>
    </location>
</feature>
<feature type="binding site" evidence="1">
    <location>
        <position position="41"/>
    </location>
    <ligand>
        <name>[4Fe-4S] cluster</name>
        <dbReference type="ChEBI" id="CHEBI:49883"/>
        <label>1</label>
    </ligand>
</feature>
<feature type="binding site" evidence="1">
    <location>
        <position position="46"/>
    </location>
    <ligand>
        <name>[4Fe-4S] cluster</name>
        <dbReference type="ChEBI" id="CHEBI:49883"/>
        <label>1</label>
    </ligand>
</feature>
<feature type="binding site" evidence="1">
    <location>
        <position position="52"/>
    </location>
    <ligand>
        <name>[4Fe-4S] cluster</name>
        <dbReference type="ChEBI" id="CHEBI:49883"/>
        <label>1</label>
    </ligand>
</feature>
<feature type="binding site" evidence="1">
    <location>
        <position position="68"/>
    </location>
    <ligand>
        <name>[4Fe-4S] cluster</name>
        <dbReference type="ChEBI" id="CHEBI:49883"/>
        <label>2</label>
        <note>4Fe-4S-S-AdoMet</note>
    </ligand>
</feature>
<feature type="binding site" evidence="1">
    <location>
        <position position="72"/>
    </location>
    <ligand>
        <name>[4Fe-4S] cluster</name>
        <dbReference type="ChEBI" id="CHEBI:49883"/>
        <label>2</label>
        <note>4Fe-4S-S-AdoMet</note>
    </ligand>
</feature>
<feature type="binding site" evidence="1">
    <location>
        <position position="75"/>
    </location>
    <ligand>
        <name>[4Fe-4S] cluster</name>
        <dbReference type="ChEBI" id="CHEBI:49883"/>
        <label>2</label>
        <note>4Fe-4S-S-AdoMet</note>
    </ligand>
</feature>
<feature type="binding site" evidence="1">
    <location>
        <position position="281"/>
    </location>
    <ligand>
        <name>[4Fe-4S] cluster</name>
        <dbReference type="ChEBI" id="CHEBI:49883"/>
        <label>1</label>
    </ligand>
</feature>
<name>LIPA_STACT</name>
<dbReference type="EC" id="2.8.1.8" evidence="1"/>
<dbReference type="EMBL" id="AM295250">
    <property type="protein sequence ID" value="CAL27442.1"/>
    <property type="molecule type" value="Genomic_DNA"/>
</dbReference>
<dbReference type="RefSeq" id="WP_015899786.1">
    <property type="nucleotide sequence ID" value="NC_012121.1"/>
</dbReference>
<dbReference type="SMR" id="B9DIX8"/>
<dbReference type="GeneID" id="93795466"/>
<dbReference type="KEGG" id="sca:SCA_0528"/>
<dbReference type="eggNOG" id="COG0320">
    <property type="taxonomic scope" value="Bacteria"/>
</dbReference>
<dbReference type="HOGENOM" id="CLU_033144_2_1_9"/>
<dbReference type="OrthoDB" id="9787898at2"/>
<dbReference type="BioCyc" id="SCAR396513:SCA_RS02700-MONOMER"/>
<dbReference type="Proteomes" id="UP000000444">
    <property type="component" value="Chromosome"/>
</dbReference>
<dbReference type="GO" id="GO:0005737">
    <property type="term" value="C:cytoplasm"/>
    <property type="evidence" value="ECO:0007669"/>
    <property type="project" value="UniProtKB-SubCell"/>
</dbReference>
<dbReference type="GO" id="GO:0051539">
    <property type="term" value="F:4 iron, 4 sulfur cluster binding"/>
    <property type="evidence" value="ECO:0007669"/>
    <property type="project" value="UniProtKB-UniRule"/>
</dbReference>
<dbReference type="GO" id="GO:0016992">
    <property type="term" value="F:lipoate synthase activity"/>
    <property type="evidence" value="ECO:0007669"/>
    <property type="project" value="UniProtKB-UniRule"/>
</dbReference>
<dbReference type="GO" id="GO:0046872">
    <property type="term" value="F:metal ion binding"/>
    <property type="evidence" value="ECO:0007669"/>
    <property type="project" value="UniProtKB-KW"/>
</dbReference>
<dbReference type="CDD" id="cd01335">
    <property type="entry name" value="Radical_SAM"/>
    <property type="match status" value="1"/>
</dbReference>
<dbReference type="FunFam" id="3.20.20.70:FF:000040">
    <property type="entry name" value="Lipoyl synthase"/>
    <property type="match status" value="1"/>
</dbReference>
<dbReference type="Gene3D" id="3.20.20.70">
    <property type="entry name" value="Aldolase class I"/>
    <property type="match status" value="1"/>
</dbReference>
<dbReference type="HAMAP" id="MF_00206">
    <property type="entry name" value="Lipoyl_synth"/>
    <property type="match status" value="1"/>
</dbReference>
<dbReference type="InterPro" id="IPR013785">
    <property type="entry name" value="Aldolase_TIM"/>
</dbReference>
<dbReference type="InterPro" id="IPR006638">
    <property type="entry name" value="Elp3/MiaA/NifB-like_rSAM"/>
</dbReference>
<dbReference type="InterPro" id="IPR031691">
    <property type="entry name" value="LIAS_N"/>
</dbReference>
<dbReference type="InterPro" id="IPR003698">
    <property type="entry name" value="Lipoyl_synth"/>
</dbReference>
<dbReference type="InterPro" id="IPR007197">
    <property type="entry name" value="rSAM"/>
</dbReference>
<dbReference type="NCBIfam" id="TIGR00510">
    <property type="entry name" value="lipA"/>
    <property type="match status" value="1"/>
</dbReference>
<dbReference type="NCBIfam" id="NF004019">
    <property type="entry name" value="PRK05481.1"/>
    <property type="match status" value="1"/>
</dbReference>
<dbReference type="NCBIfam" id="NF009544">
    <property type="entry name" value="PRK12928.1"/>
    <property type="match status" value="1"/>
</dbReference>
<dbReference type="PANTHER" id="PTHR10949">
    <property type="entry name" value="LIPOYL SYNTHASE"/>
    <property type="match status" value="1"/>
</dbReference>
<dbReference type="PANTHER" id="PTHR10949:SF0">
    <property type="entry name" value="LIPOYL SYNTHASE, MITOCHONDRIAL"/>
    <property type="match status" value="1"/>
</dbReference>
<dbReference type="Pfam" id="PF16881">
    <property type="entry name" value="LIAS_N"/>
    <property type="match status" value="1"/>
</dbReference>
<dbReference type="Pfam" id="PF04055">
    <property type="entry name" value="Radical_SAM"/>
    <property type="match status" value="1"/>
</dbReference>
<dbReference type="PIRSF" id="PIRSF005963">
    <property type="entry name" value="Lipoyl_synth"/>
    <property type="match status" value="1"/>
</dbReference>
<dbReference type="SFLD" id="SFLDF00271">
    <property type="entry name" value="lipoyl_synthase"/>
    <property type="match status" value="1"/>
</dbReference>
<dbReference type="SFLD" id="SFLDS00029">
    <property type="entry name" value="Radical_SAM"/>
    <property type="match status" value="1"/>
</dbReference>
<dbReference type="SMART" id="SM00729">
    <property type="entry name" value="Elp3"/>
    <property type="match status" value="1"/>
</dbReference>
<dbReference type="SUPFAM" id="SSF102114">
    <property type="entry name" value="Radical SAM enzymes"/>
    <property type="match status" value="1"/>
</dbReference>
<dbReference type="PROSITE" id="PS51918">
    <property type="entry name" value="RADICAL_SAM"/>
    <property type="match status" value="1"/>
</dbReference>
<accession>B9DIX8</accession>